<dbReference type="EMBL" id="EU925942">
    <property type="protein sequence ID" value="ACI41274.1"/>
    <property type="molecule type" value="mRNA"/>
</dbReference>
<dbReference type="EMBL" id="FM863946">
    <property type="protein sequence ID" value="CAS03544.1"/>
    <property type="molecule type" value="mRNA"/>
</dbReference>
<dbReference type="SMR" id="B6DCK8"/>
<dbReference type="ArachnoServer" id="AS000891">
    <property type="toxin name" value="U1-lycotoxin-Ls1g"/>
</dbReference>
<dbReference type="GO" id="GO:0005576">
    <property type="term" value="C:extracellular region"/>
    <property type="evidence" value="ECO:0007669"/>
    <property type="project" value="UniProtKB-SubCell"/>
</dbReference>
<dbReference type="GO" id="GO:0090729">
    <property type="term" value="F:toxin activity"/>
    <property type="evidence" value="ECO:0007669"/>
    <property type="project" value="UniProtKB-KW"/>
</dbReference>
<dbReference type="InterPro" id="IPR019553">
    <property type="entry name" value="Spider_toxin_CSTX_knottin"/>
</dbReference>
<dbReference type="Pfam" id="PF10530">
    <property type="entry name" value="Toxin_35"/>
    <property type="match status" value="1"/>
</dbReference>
<feature type="signal peptide" evidence="2">
    <location>
        <begin position="1"/>
        <end position="20"/>
    </location>
</feature>
<feature type="propeptide" id="PRO_0000401533" evidence="1">
    <location>
        <begin position="21"/>
        <end position="41"/>
    </location>
</feature>
<feature type="chain" id="PRO_0000401534" description="U1-lycotoxin-Ls1g">
    <location>
        <begin position="42"/>
        <end position="107"/>
    </location>
</feature>
<feature type="disulfide bond" evidence="1">
    <location>
        <begin position="51"/>
        <end position="68"/>
    </location>
</feature>
<feature type="disulfide bond" evidence="1">
    <location>
        <begin position="58"/>
        <end position="86"/>
    </location>
</feature>
<feature type="disulfide bond" evidence="1">
    <location>
        <begin position="70"/>
        <end position="84"/>
    </location>
</feature>
<evidence type="ECO:0000250" key="1"/>
<evidence type="ECO:0000255" key="2"/>
<evidence type="ECO:0000305" key="3"/>
<organism>
    <name type="scientific">Lycosa singoriensis</name>
    <name type="common">Wolf spider</name>
    <name type="synonym">Aranea singoriensis</name>
    <dbReference type="NCBI Taxonomy" id="434756"/>
    <lineage>
        <taxon>Eukaryota</taxon>
        <taxon>Metazoa</taxon>
        <taxon>Ecdysozoa</taxon>
        <taxon>Arthropoda</taxon>
        <taxon>Chelicerata</taxon>
        <taxon>Arachnida</taxon>
        <taxon>Araneae</taxon>
        <taxon>Araneomorphae</taxon>
        <taxon>Entelegynae</taxon>
        <taxon>Lycosoidea</taxon>
        <taxon>Lycosidae</taxon>
        <taxon>Lycosa</taxon>
    </lineage>
</organism>
<comment type="subcellular location">
    <subcellularLocation>
        <location evidence="1">Secreted</location>
    </subcellularLocation>
</comment>
<comment type="tissue specificity">
    <text>Expressed by the venom gland.</text>
</comment>
<comment type="similarity">
    <text evidence="3">Belongs to the neurotoxin 19 (CSTX) family. 04 (U1-Lctx) subfamily.</text>
</comment>
<proteinExistence type="evidence at transcript level"/>
<accession>B6DCK8</accession>
<protein>
    <recommendedName>
        <fullName>U1-lycotoxin-Ls1g</fullName>
    </recommendedName>
    <alternativeName>
        <fullName>Toxin-like structure LSTX-A19</fullName>
    </alternativeName>
</protein>
<reference key="1">
    <citation type="journal article" date="2010" name="Zoology">
        <title>Transcriptome analysis of the venom glands of the Chinese wolf spider Lycosa singoriensis.</title>
        <authorList>
            <person name="Zhang Y."/>
            <person name="Chen J."/>
            <person name="Tang X."/>
            <person name="Wang F."/>
            <person name="Jiang L."/>
            <person name="Xiong X."/>
            <person name="Wang M."/>
            <person name="Rong M."/>
            <person name="Liu Z."/>
            <person name="Liang S."/>
        </authorList>
    </citation>
    <scope>NUCLEOTIDE SEQUENCE [LARGE SCALE MRNA]</scope>
    <source>
        <tissue>Venom gland</tissue>
    </source>
</reference>
<keyword id="KW-1015">Disulfide bond</keyword>
<keyword id="KW-0964">Secreted</keyword>
<keyword id="KW-0732">Signal</keyword>
<keyword id="KW-0800">Toxin</keyword>
<sequence>MMKVLVVVALLVTLISYSSSEGIDDLEADELLSLMANEQTRKERIPKHHECTSNKHGCCRGNFFKYKCQCTTVVTQDGEQTERCFCGTPPHHKAAELVVGFGKKIFG</sequence>
<name>TX119_LYCSI</name>